<organism>
    <name type="scientific">Escherichia fergusonii (strain ATCC 35469 / DSM 13698 / CCUG 18766 / IAM 14443 / JCM 21226 / LMG 7866 / NBRC 102419 / NCTC 12128 / CDC 0568-73)</name>
    <dbReference type="NCBI Taxonomy" id="585054"/>
    <lineage>
        <taxon>Bacteria</taxon>
        <taxon>Pseudomonadati</taxon>
        <taxon>Pseudomonadota</taxon>
        <taxon>Gammaproteobacteria</taxon>
        <taxon>Enterobacterales</taxon>
        <taxon>Enterobacteriaceae</taxon>
        <taxon>Escherichia</taxon>
    </lineage>
</organism>
<comment type="function">
    <text evidence="1">Involved in protein export. Acts as a chaperone by maintaining the newly synthesized protein in an open conformation. Functions as a peptidyl-prolyl cis-trans isomerase.</text>
</comment>
<comment type="catalytic activity">
    <reaction evidence="1">
        <text>[protein]-peptidylproline (omega=180) = [protein]-peptidylproline (omega=0)</text>
        <dbReference type="Rhea" id="RHEA:16237"/>
        <dbReference type="Rhea" id="RHEA-COMP:10747"/>
        <dbReference type="Rhea" id="RHEA-COMP:10748"/>
        <dbReference type="ChEBI" id="CHEBI:83833"/>
        <dbReference type="ChEBI" id="CHEBI:83834"/>
        <dbReference type="EC" id="5.2.1.8"/>
    </reaction>
</comment>
<comment type="subunit">
    <text evidence="1">Homodimer and monomer. In vivo most of the ribosomes are in complex with monomeric TF. Uncomplexed TF, however, is in a monomer-dimer equilibrium with approximately two thirds of TF existing in a dimeric state.</text>
</comment>
<comment type="subcellular location">
    <subcellularLocation>
        <location>Cytoplasm</location>
    </subcellularLocation>
    <text evidence="1">About half TF is bound to the ribosome near the polypeptide exit tunnel while the other half is free in the cytoplasm.</text>
</comment>
<comment type="domain">
    <text evidence="1">Consists of 3 domains; the N-terminus binds the ribosome, the middle domain has PPIase activity, while the C-terminus has intrinsic chaperone activity on its own.</text>
</comment>
<comment type="similarity">
    <text evidence="1">Belongs to the FKBP-type PPIase family. Tig subfamily.</text>
</comment>
<evidence type="ECO:0000255" key="1">
    <source>
        <dbReference type="HAMAP-Rule" id="MF_00303"/>
    </source>
</evidence>
<proteinExistence type="inferred from homology"/>
<accession>B7LME3</accession>
<sequence length="432" mass="48317">MQVSVETTQGLGRRVTITIAADSIETAVKSELVNVAKKVRIDGFRKGKVPMNIVAQRYGASVRQDVLGDLMSRHFIDAIIKEKINPAGAPNYVPGEYKPGEDFTYAVEFEVYPEIELKDLETIEVEKPIVEVTDADVDMMLDTLRKQQATWKEKDGAADAEDRVTIDFTGSVDGEEFEGGKASDFVLAMGQGRMIPGFEDGIKGHKAGEEFTIDVTFPEDYHAENLKGKAAKFAINLKKVEERELPELTEDFIKRFGVEDGSVEGLRAEVRKNMERELKGAVRNRVKSQAIEGLVKANDIDVPAALIDSEIDVLRRQAAQRFGGNEKQALELPRELFEEQAKRRVVVGLLLGEVIRTNELKADEERVKGLIEEMASAYEDPKEVIEFYSKNKELMDNMRNVALEEQAVEAVLAKAKVTEKETTFNELMNQQA</sequence>
<name>TIG_ESCF3</name>
<keyword id="KW-0131">Cell cycle</keyword>
<keyword id="KW-0132">Cell division</keyword>
<keyword id="KW-0143">Chaperone</keyword>
<keyword id="KW-0963">Cytoplasm</keyword>
<keyword id="KW-0413">Isomerase</keyword>
<keyword id="KW-0697">Rotamase</keyword>
<reference key="1">
    <citation type="journal article" date="2009" name="PLoS Genet.">
        <title>Organised genome dynamics in the Escherichia coli species results in highly diverse adaptive paths.</title>
        <authorList>
            <person name="Touchon M."/>
            <person name="Hoede C."/>
            <person name="Tenaillon O."/>
            <person name="Barbe V."/>
            <person name="Baeriswyl S."/>
            <person name="Bidet P."/>
            <person name="Bingen E."/>
            <person name="Bonacorsi S."/>
            <person name="Bouchier C."/>
            <person name="Bouvet O."/>
            <person name="Calteau A."/>
            <person name="Chiapello H."/>
            <person name="Clermont O."/>
            <person name="Cruveiller S."/>
            <person name="Danchin A."/>
            <person name="Diard M."/>
            <person name="Dossat C."/>
            <person name="Karoui M.E."/>
            <person name="Frapy E."/>
            <person name="Garry L."/>
            <person name="Ghigo J.M."/>
            <person name="Gilles A.M."/>
            <person name="Johnson J."/>
            <person name="Le Bouguenec C."/>
            <person name="Lescat M."/>
            <person name="Mangenot S."/>
            <person name="Martinez-Jehanne V."/>
            <person name="Matic I."/>
            <person name="Nassif X."/>
            <person name="Oztas S."/>
            <person name="Petit M.A."/>
            <person name="Pichon C."/>
            <person name="Rouy Z."/>
            <person name="Ruf C.S."/>
            <person name="Schneider D."/>
            <person name="Tourret J."/>
            <person name="Vacherie B."/>
            <person name="Vallenet D."/>
            <person name="Medigue C."/>
            <person name="Rocha E.P.C."/>
            <person name="Denamur E."/>
        </authorList>
    </citation>
    <scope>NUCLEOTIDE SEQUENCE [LARGE SCALE GENOMIC DNA]</scope>
    <source>
        <strain>ATCC 35469 / DSM 13698 / BCRC 15582 / CCUG 18766 / IAM 14443 / JCM 21226 / LMG 7866 / NBRC 102419 / NCTC 12128 / CDC 0568-73</strain>
    </source>
</reference>
<dbReference type="EC" id="5.2.1.8" evidence="1"/>
<dbReference type="EMBL" id="CU928158">
    <property type="protein sequence ID" value="CAQ90076.1"/>
    <property type="molecule type" value="Genomic_DNA"/>
</dbReference>
<dbReference type="RefSeq" id="WP_001198375.1">
    <property type="nucleotide sequence ID" value="NC_011740.1"/>
</dbReference>
<dbReference type="SMR" id="B7LME3"/>
<dbReference type="GeneID" id="75056388"/>
<dbReference type="KEGG" id="efe:EFER_2581"/>
<dbReference type="HOGENOM" id="CLU_033058_2_0_6"/>
<dbReference type="OrthoDB" id="9767721at2"/>
<dbReference type="Proteomes" id="UP000000745">
    <property type="component" value="Chromosome"/>
</dbReference>
<dbReference type="GO" id="GO:0005737">
    <property type="term" value="C:cytoplasm"/>
    <property type="evidence" value="ECO:0007669"/>
    <property type="project" value="UniProtKB-SubCell"/>
</dbReference>
<dbReference type="GO" id="GO:0003755">
    <property type="term" value="F:peptidyl-prolyl cis-trans isomerase activity"/>
    <property type="evidence" value="ECO:0007669"/>
    <property type="project" value="UniProtKB-UniRule"/>
</dbReference>
<dbReference type="GO" id="GO:0044183">
    <property type="term" value="F:protein folding chaperone"/>
    <property type="evidence" value="ECO:0007669"/>
    <property type="project" value="TreeGrafter"/>
</dbReference>
<dbReference type="GO" id="GO:0043022">
    <property type="term" value="F:ribosome binding"/>
    <property type="evidence" value="ECO:0007669"/>
    <property type="project" value="TreeGrafter"/>
</dbReference>
<dbReference type="GO" id="GO:0051083">
    <property type="term" value="P:'de novo' cotranslational protein folding"/>
    <property type="evidence" value="ECO:0007669"/>
    <property type="project" value="TreeGrafter"/>
</dbReference>
<dbReference type="GO" id="GO:0051301">
    <property type="term" value="P:cell division"/>
    <property type="evidence" value="ECO:0007669"/>
    <property type="project" value="UniProtKB-KW"/>
</dbReference>
<dbReference type="GO" id="GO:0061077">
    <property type="term" value="P:chaperone-mediated protein folding"/>
    <property type="evidence" value="ECO:0007669"/>
    <property type="project" value="TreeGrafter"/>
</dbReference>
<dbReference type="GO" id="GO:0015031">
    <property type="term" value="P:protein transport"/>
    <property type="evidence" value="ECO:0007669"/>
    <property type="project" value="UniProtKB-UniRule"/>
</dbReference>
<dbReference type="GO" id="GO:0043335">
    <property type="term" value="P:protein unfolding"/>
    <property type="evidence" value="ECO:0007669"/>
    <property type="project" value="TreeGrafter"/>
</dbReference>
<dbReference type="FunFam" id="1.10.3120.10:FF:000001">
    <property type="entry name" value="Trigger factor"/>
    <property type="match status" value="1"/>
</dbReference>
<dbReference type="FunFam" id="3.10.50.40:FF:000001">
    <property type="entry name" value="Trigger factor"/>
    <property type="match status" value="1"/>
</dbReference>
<dbReference type="FunFam" id="3.30.70.1050:FF:000001">
    <property type="entry name" value="Trigger factor"/>
    <property type="match status" value="1"/>
</dbReference>
<dbReference type="Gene3D" id="3.10.50.40">
    <property type="match status" value="1"/>
</dbReference>
<dbReference type="Gene3D" id="3.30.70.1050">
    <property type="entry name" value="Trigger factor ribosome-binding domain"/>
    <property type="match status" value="1"/>
</dbReference>
<dbReference type="Gene3D" id="1.10.3120.10">
    <property type="entry name" value="Trigger factor, C-terminal domain"/>
    <property type="match status" value="1"/>
</dbReference>
<dbReference type="HAMAP" id="MF_00303">
    <property type="entry name" value="Trigger_factor_Tig"/>
    <property type="match status" value="1"/>
</dbReference>
<dbReference type="InterPro" id="IPR046357">
    <property type="entry name" value="PPIase_dom_sf"/>
</dbReference>
<dbReference type="InterPro" id="IPR001179">
    <property type="entry name" value="PPIase_FKBP_dom"/>
</dbReference>
<dbReference type="InterPro" id="IPR005215">
    <property type="entry name" value="Trig_fac"/>
</dbReference>
<dbReference type="InterPro" id="IPR008880">
    <property type="entry name" value="Trigger_fac_C"/>
</dbReference>
<dbReference type="InterPro" id="IPR037041">
    <property type="entry name" value="Trigger_fac_C_sf"/>
</dbReference>
<dbReference type="InterPro" id="IPR008881">
    <property type="entry name" value="Trigger_fac_ribosome-bd_bac"/>
</dbReference>
<dbReference type="InterPro" id="IPR036611">
    <property type="entry name" value="Trigger_fac_ribosome-bd_sf"/>
</dbReference>
<dbReference type="InterPro" id="IPR027304">
    <property type="entry name" value="Trigger_fact/SurA_dom_sf"/>
</dbReference>
<dbReference type="NCBIfam" id="TIGR00115">
    <property type="entry name" value="tig"/>
    <property type="match status" value="1"/>
</dbReference>
<dbReference type="PANTHER" id="PTHR30560">
    <property type="entry name" value="TRIGGER FACTOR CHAPERONE AND PEPTIDYL-PROLYL CIS/TRANS ISOMERASE"/>
    <property type="match status" value="1"/>
</dbReference>
<dbReference type="PANTHER" id="PTHR30560:SF3">
    <property type="entry name" value="TRIGGER FACTOR-LIKE PROTEIN TIG, CHLOROPLASTIC"/>
    <property type="match status" value="1"/>
</dbReference>
<dbReference type="Pfam" id="PF00254">
    <property type="entry name" value="FKBP_C"/>
    <property type="match status" value="1"/>
</dbReference>
<dbReference type="Pfam" id="PF05698">
    <property type="entry name" value="Trigger_C"/>
    <property type="match status" value="1"/>
</dbReference>
<dbReference type="Pfam" id="PF05697">
    <property type="entry name" value="Trigger_N"/>
    <property type="match status" value="1"/>
</dbReference>
<dbReference type="PIRSF" id="PIRSF003095">
    <property type="entry name" value="Trigger_factor"/>
    <property type="match status" value="1"/>
</dbReference>
<dbReference type="SUPFAM" id="SSF54534">
    <property type="entry name" value="FKBP-like"/>
    <property type="match status" value="1"/>
</dbReference>
<dbReference type="SUPFAM" id="SSF109998">
    <property type="entry name" value="Triger factor/SurA peptide-binding domain-like"/>
    <property type="match status" value="1"/>
</dbReference>
<dbReference type="SUPFAM" id="SSF102735">
    <property type="entry name" value="Trigger factor ribosome-binding domain"/>
    <property type="match status" value="1"/>
</dbReference>
<dbReference type="PROSITE" id="PS50059">
    <property type="entry name" value="FKBP_PPIASE"/>
    <property type="match status" value="1"/>
</dbReference>
<protein>
    <recommendedName>
        <fullName evidence="1">Trigger factor</fullName>
        <shortName evidence="1">TF</shortName>
        <ecNumber evidence="1">5.2.1.8</ecNumber>
    </recommendedName>
    <alternativeName>
        <fullName evidence="1">PPIase</fullName>
    </alternativeName>
</protein>
<feature type="chain" id="PRO_1000119520" description="Trigger factor">
    <location>
        <begin position="1"/>
        <end position="432"/>
    </location>
</feature>
<feature type="domain" description="PPIase FKBP-type" evidence="1">
    <location>
        <begin position="161"/>
        <end position="246"/>
    </location>
</feature>
<gene>
    <name evidence="1" type="primary">tig</name>
    <name type="ordered locus">EFER_2581</name>
</gene>